<proteinExistence type="inferred from homology"/>
<keyword id="KW-0687">Ribonucleoprotein</keyword>
<keyword id="KW-0689">Ribosomal protein</keyword>
<keyword id="KW-0694">RNA-binding</keyword>
<keyword id="KW-0699">rRNA-binding</keyword>
<organism>
    <name type="scientific">Streptococcus equi subsp. zooepidemicus (strain MGCS10565)</name>
    <dbReference type="NCBI Taxonomy" id="552526"/>
    <lineage>
        <taxon>Bacteria</taxon>
        <taxon>Bacillati</taxon>
        <taxon>Bacillota</taxon>
        <taxon>Bacilli</taxon>
        <taxon>Lactobacillales</taxon>
        <taxon>Streptococcaceae</taxon>
        <taxon>Streptococcus</taxon>
    </lineage>
</organism>
<evidence type="ECO:0000255" key="1">
    <source>
        <dbReference type="HAMAP-Rule" id="MF_01302"/>
    </source>
</evidence>
<evidence type="ECO:0000305" key="2"/>
<dbReference type="EMBL" id="CP001129">
    <property type="protein sequence ID" value="ACG61453.1"/>
    <property type="molecule type" value="Genomic_DNA"/>
</dbReference>
<dbReference type="RefSeq" id="WP_012514743.1">
    <property type="nucleotide sequence ID" value="NC_011134.1"/>
</dbReference>
<dbReference type="SMR" id="B4U514"/>
<dbReference type="GeneID" id="83703918"/>
<dbReference type="KEGG" id="sez:Sez_0070"/>
<dbReference type="HOGENOM" id="CLU_098428_0_2_9"/>
<dbReference type="Proteomes" id="UP000001873">
    <property type="component" value="Chromosome"/>
</dbReference>
<dbReference type="GO" id="GO:1990904">
    <property type="term" value="C:ribonucleoprotein complex"/>
    <property type="evidence" value="ECO:0007669"/>
    <property type="project" value="UniProtKB-KW"/>
</dbReference>
<dbReference type="GO" id="GO:0005840">
    <property type="term" value="C:ribosome"/>
    <property type="evidence" value="ECO:0007669"/>
    <property type="project" value="UniProtKB-KW"/>
</dbReference>
<dbReference type="GO" id="GO:0019843">
    <property type="term" value="F:rRNA binding"/>
    <property type="evidence" value="ECO:0007669"/>
    <property type="project" value="UniProtKB-UniRule"/>
</dbReference>
<dbReference type="GO" id="GO:0003735">
    <property type="term" value="F:structural constituent of ribosome"/>
    <property type="evidence" value="ECO:0007669"/>
    <property type="project" value="InterPro"/>
</dbReference>
<dbReference type="GO" id="GO:0006412">
    <property type="term" value="P:translation"/>
    <property type="evidence" value="ECO:0007669"/>
    <property type="project" value="UniProtKB-UniRule"/>
</dbReference>
<dbReference type="FunFam" id="3.30.1370.30:FF:000002">
    <property type="entry name" value="30S ribosomal protein S8"/>
    <property type="match status" value="1"/>
</dbReference>
<dbReference type="FunFam" id="3.30.1490.10:FF:000001">
    <property type="entry name" value="30S ribosomal protein S8"/>
    <property type="match status" value="1"/>
</dbReference>
<dbReference type="Gene3D" id="3.30.1370.30">
    <property type="match status" value="1"/>
</dbReference>
<dbReference type="Gene3D" id="3.30.1490.10">
    <property type="match status" value="1"/>
</dbReference>
<dbReference type="HAMAP" id="MF_01302_B">
    <property type="entry name" value="Ribosomal_uS8_B"/>
    <property type="match status" value="1"/>
</dbReference>
<dbReference type="InterPro" id="IPR000630">
    <property type="entry name" value="Ribosomal_uS8"/>
</dbReference>
<dbReference type="InterPro" id="IPR047863">
    <property type="entry name" value="Ribosomal_uS8_CS"/>
</dbReference>
<dbReference type="InterPro" id="IPR035987">
    <property type="entry name" value="Ribosomal_uS8_sf"/>
</dbReference>
<dbReference type="NCBIfam" id="NF001109">
    <property type="entry name" value="PRK00136.1"/>
    <property type="match status" value="1"/>
</dbReference>
<dbReference type="PANTHER" id="PTHR11758">
    <property type="entry name" value="40S RIBOSOMAL PROTEIN S15A"/>
    <property type="match status" value="1"/>
</dbReference>
<dbReference type="Pfam" id="PF00410">
    <property type="entry name" value="Ribosomal_S8"/>
    <property type="match status" value="1"/>
</dbReference>
<dbReference type="SUPFAM" id="SSF56047">
    <property type="entry name" value="Ribosomal protein S8"/>
    <property type="match status" value="1"/>
</dbReference>
<dbReference type="PROSITE" id="PS00053">
    <property type="entry name" value="RIBOSOMAL_S8"/>
    <property type="match status" value="1"/>
</dbReference>
<feature type="chain" id="PRO_1000140615" description="Small ribosomal subunit protein uS8">
    <location>
        <begin position="1"/>
        <end position="132"/>
    </location>
</feature>
<reference key="1">
    <citation type="journal article" date="2008" name="PLoS ONE">
        <title>Genome sequence of a lancefield group C Streptococcus zooepidemicus strain causing epidemic nephritis: new information about an old disease.</title>
        <authorList>
            <person name="Beres S.B."/>
            <person name="Sesso R."/>
            <person name="Pinto S.W.L."/>
            <person name="Hoe N.P."/>
            <person name="Porcella S.F."/>
            <person name="Deleo F.R."/>
            <person name="Musser J.M."/>
        </authorList>
    </citation>
    <scope>NUCLEOTIDE SEQUENCE [LARGE SCALE GENOMIC DNA]</scope>
    <source>
        <strain>MGCS10565</strain>
    </source>
</reference>
<gene>
    <name evidence="1" type="primary">rpsH</name>
    <name type="ordered locus">Sez_0070</name>
</gene>
<protein>
    <recommendedName>
        <fullName evidence="1">Small ribosomal subunit protein uS8</fullName>
    </recommendedName>
    <alternativeName>
        <fullName evidence="2">30S ribosomal protein S8</fullName>
    </alternativeName>
</protein>
<comment type="function">
    <text evidence="1">One of the primary rRNA binding proteins, it binds directly to 16S rRNA central domain where it helps coordinate assembly of the platform of the 30S subunit.</text>
</comment>
<comment type="subunit">
    <text evidence="1">Part of the 30S ribosomal subunit. Contacts proteins S5 and S12.</text>
</comment>
<comment type="similarity">
    <text evidence="1">Belongs to the universal ribosomal protein uS8 family.</text>
</comment>
<accession>B4U514</accession>
<name>RS8_STREM</name>
<sequence length="132" mass="14756">MVMTDPIADFLTRIRNANQVKHEVLEVPASNIKKGIAEILKREGFIKNVEVIEDGKQGIIRVFLKYGQNGERVITNLKRVSKPGLRIYSKREDVPKVLNGLGIAIISTSEGLLTDKEARQKNVGGEVIAYVW</sequence>